<gene>
    <name type="primary">DECR2</name>
</gene>
<comment type="function">
    <text evidence="2">Auxiliary enzyme of beta-oxidation. Participates in the degradation of unsaturated fatty enoyl-CoA esters having double bonds in both even- and odd-numbered positions in peroxisome. Catalyzes the NADP-dependent reduction of 2,4-dienoyl-CoA to yield trans-3-enoyl-CoA. Has activity towards short and medium chain 2,4-dienoyl-CoAs, but also towards 2,4,7,10,13,16,19-docosaheptaenoyl-CoA, suggesting that it does not constitute a rate limiting step in the peroxisomal degradation of docosahexaenoic acid.</text>
</comment>
<comment type="catalytic activity">
    <reaction evidence="2">
        <text>a (2E,4Z)-dienoyl-CoA + NADPH + H(+) = a 4,5-saturated-(3E)-enoyl-CoA + NADP(+)</text>
        <dbReference type="Rhea" id="RHEA:61892"/>
        <dbReference type="ChEBI" id="CHEBI:15378"/>
        <dbReference type="ChEBI" id="CHEBI:57783"/>
        <dbReference type="ChEBI" id="CHEBI:58349"/>
        <dbReference type="ChEBI" id="CHEBI:85099"/>
        <dbReference type="ChEBI" id="CHEBI:85493"/>
        <dbReference type="EC" id="1.3.1.124"/>
    </reaction>
</comment>
<comment type="catalytic activity">
    <reaction evidence="2">
        <text>a (2E,4E)-dienoyl-CoA + NADPH + H(+) = a 4,5-saturated-(3E)-enoyl-CoA + NADP(+)</text>
        <dbReference type="Rhea" id="RHEA:45912"/>
        <dbReference type="ChEBI" id="CHEBI:15378"/>
        <dbReference type="ChEBI" id="CHEBI:57783"/>
        <dbReference type="ChEBI" id="CHEBI:58349"/>
        <dbReference type="ChEBI" id="CHEBI:85101"/>
        <dbReference type="ChEBI" id="CHEBI:85493"/>
        <dbReference type="EC" id="1.3.1.124"/>
    </reaction>
</comment>
<comment type="catalytic activity">
    <reaction evidence="2">
        <text>(2E,4E)-hexadienoyl-CoA + NADPH + H(+) = (3E)-hexenoyl-CoA + NADP(+)</text>
        <dbReference type="Rhea" id="RHEA:44912"/>
        <dbReference type="ChEBI" id="CHEBI:15378"/>
        <dbReference type="ChEBI" id="CHEBI:57783"/>
        <dbReference type="ChEBI" id="CHEBI:58349"/>
        <dbReference type="ChEBI" id="CHEBI:84788"/>
        <dbReference type="ChEBI" id="CHEBI:84790"/>
    </reaction>
</comment>
<comment type="catalytic activity">
    <reaction evidence="2">
        <text>(2E,4E)-decadienoyl-CoA + NADPH + H(+) = (3E)-decenoyl-CoA + NADP(+)</text>
        <dbReference type="Rhea" id="RHEA:44916"/>
        <dbReference type="ChEBI" id="CHEBI:15378"/>
        <dbReference type="ChEBI" id="CHEBI:57783"/>
        <dbReference type="ChEBI" id="CHEBI:58349"/>
        <dbReference type="ChEBI" id="CHEBI:62244"/>
        <dbReference type="ChEBI" id="CHEBI:84793"/>
    </reaction>
</comment>
<comment type="catalytic activity">
    <reaction evidence="2">
        <text>(2E,4Z,7Z,10Z,13Z,16Z,19Z)-docosaheptaenoyl-CoA + NADPH + H(+) = (3E,7Z,10Z,13Z,16Z,19Z)-docosahexaenoyl-CoA + NADP(+)</text>
        <dbReference type="Rhea" id="RHEA:44920"/>
        <dbReference type="ChEBI" id="CHEBI:15378"/>
        <dbReference type="ChEBI" id="CHEBI:57783"/>
        <dbReference type="ChEBI" id="CHEBI:58349"/>
        <dbReference type="ChEBI" id="CHEBI:77559"/>
        <dbReference type="ChEBI" id="CHEBI:84791"/>
    </reaction>
</comment>
<comment type="subunit">
    <text evidence="2">Monomer, dimer and oligomer.</text>
</comment>
<comment type="subcellular location">
    <subcellularLocation>
        <location evidence="3">Peroxisome</location>
    </subcellularLocation>
</comment>
<comment type="similarity">
    <text evidence="4">Belongs to the short-chain dehydrogenases/reductases (SDR) family. 2,4-dienoyl-CoA reductase subfamily.</text>
</comment>
<evidence type="ECO:0000250" key="1"/>
<evidence type="ECO:0000250" key="2">
    <source>
        <dbReference type="UniProtKB" id="Q9NUI1"/>
    </source>
</evidence>
<evidence type="ECO:0000250" key="3">
    <source>
        <dbReference type="UniProtKB" id="Q9Z2M4"/>
    </source>
</evidence>
<evidence type="ECO:0000305" key="4"/>
<accession>Q5RBV3</accession>
<feature type="initiator methionine" description="Removed" evidence="2">
    <location>
        <position position="1"/>
    </location>
</feature>
<feature type="chain" id="PRO_0000054561" description="Peroxisomal 2,4-dienoyl-CoA reductase [(3E)-enoyl-CoA-producing]">
    <location>
        <begin position="2"/>
        <end position="292"/>
    </location>
</feature>
<feature type="short sequence motif" description="Microbody targeting signal" evidence="1">
    <location>
        <begin position="290"/>
        <end position="292"/>
    </location>
</feature>
<feature type="binding site" evidence="1">
    <location>
        <begin position="35"/>
        <end position="40"/>
    </location>
    <ligand>
        <name>NADP(+)</name>
        <dbReference type="ChEBI" id="CHEBI:58349"/>
    </ligand>
</feature>
<feature type="binding site" evidence="1">
    <location>
        <begin position="60"/>
        <end position="64"/>
    </location>
    <ligand>
        <name>NADP(+)</name>
        <dbReference type="ChEBI" id="CHEBI:58349"/>
    </ligand>
</feature>
<feature type="binding site" evidence="1">
    <location>
        <position position="60"/>
    </location>
    <ligand>
        <name>substrate</name>
    </ligand>
</feature>
<feature type="binding site" evidence="1">
    <location>
        <position position="86"/>
    </location>
    <ligand>
        <name>NADP(+)</name>
        <dbReference type="ChEBI" id="CHEBI:58349"/>
    </ligand>
</feature>
<feature type="binding site" evidence="1">
    <location>
        <position position="88"/>
    </location>
    <ligand>
        <name>substrate</name>
    </ligand>
</feature>
<feature type="binding site" evidence="1">
    <location>
        <position position="118"/>
    </location>
    <ligand>
        <name>substrate</name>
    </ligand>
</feature>
<feature type="binding site" evidence="1">
    <location>
        <begin position="126"/>
        <end position="128"/>
    </location>
    <ligand>
        <name>substrate</name>
    </ligand>
</feature>
<feature type="binding site" evidence="1">
    <location>
        <position position="182"/>
    </location>
    <ligand>
        <name>NADP(+)</name>
        <dbReference type="ChEBI" id="CHEBI:58349"/>
    </ligand>
</feature>
<feature type="binding site" evidence="1">
    <location>
        <begin position="208"/>
        <end position="214"/>
    </location>
    <ligand>
        <name>NADP(+)</name>
        <dbReference type="ChEBI" id="CHEBI:58349"/>
    </ligand>
</feature>
<feature type="binding site" evidence="1">
    <location>
        <position position="219"/>
    </location>
    <ligand>
        <name>substrate</name>
    </ligand>
</feature>
<feature type="modified residue" description="N-acetylalanine" evidence="2">
    <location>
        <position position="2"/>
    </location>
</feature>
<feature type="modified residue" description="N6-acetyllysine" evidence="2">
    <location>
        <position position="151"/>
    </location>
</feature>
<feature type="modified residue" description="Phosphoserine" evidence="2">
    <location>
        <position position="287"/>
    </location>
</feature>
<feature type="modified residue" description="N6-acetyllysine" evidence="2">
    <location>
        <position position="291"/>
    </location>
</feature>
<organism>
    <name type="scientific">Pongo abelii</name>
    <name type="common">Sumatran orangutan</name>
    <name type="synonym">Pongo pygmaeus abelii</name>
    <dbReference type="NCBI Taxonomy" id="9601"/>
    <lineage>
        <taxon>Eukaryota</taxon>
        <taxon>Metazoa</taxon>
        <taxon>Chordata</taxon>
        <taxon>Craniata</taxon>
        <taxon>Vertebrata</taxon>
        <taxon>Euteleostomi</taxon>
        <taxon>Mammalia</taxon>
        <taxon>Eutheria</taxon>
        <taxon>Euarchontoglires</taxon>
        <taxon>Primates</taxon>
        <taxon>Haplorrhini</taxon>
        <taxon>Catarrhini</taxon>
        <taxon>Hominidae</taxon>
        <taxon>Pongo</taxon>
    </lineage>
</organism>
<proteinExistence type="evidence at transcript level"/>
<sequence>MAQPPPDVEGDDCLPAYRHLFCPDLLRDKVAFITGGGSGIGFRIAEIFMRHGCHTVIASRSLPRVLTAARKLAGATGRRCLPLSMDVRAPPAIVAAVDQALKEFGRIDILINCAAGNFLCPAGALSFNAFKTVMDIDTSGTFNVSRVLYEKFFRDHGGVIVNITATLGNRGQALQVHAGSAKAAVDAMTRHLAVEWGPQNIRVNSLAPGPISGTEGLRRLGGPQASLSTKVTASPLQRLGNKTEIAHSVLYLASPLASYVTGAVLVADGGAWLTFPNDVKGLADFASFSAKL</sequence>
<name>DECR2_PONAB</name>
<reference key="1">
    <citation type="submission" date="2004-11" db="EMBL/GenBank/DDBJ databases">
        <authorList>
            <consortium name="The German cDNA consortium"/>
        </authorList>
    </citation>
    <scope>NUCLEOTIDE SEQUENCE [LARGE SCALE MRNA]</scope>
    <source>
        <tissue>Heart</tissue>
    </source>
</reference>
<keyword id="KW-0007">Acetylation</keyword>
<keyword id="KW-0276">Fatty acid metabolism</keyword>
<keyword id="KW-0443">Lipid metabolism</keyword>
<keyword id="KW-0521">NADP</keyword>
<keyword id="KW-0560">Oxidoreductase</keyword>
<keyword id="KW-0576">Peroxisome</keyword>
<keyword id="KW-0597">Phosphoprotein</keyword>
<keyword id="KW-1185">Reference proteome</keyword>
<protein>
    <recommendedName>
        <fullName>Peroxisomal 2,4-dienoyl-CoA reductase [(3E)-enoyl-CoA-producing]</fullName>
        <ecNumber evidence="2">1.3.1.124</ecNumber>
    </recommendedName>
    <alternativeName>
        <fullName>2,4-dienoyl-CoA reductase 2</fullName>
    </alternativeName>
</protein>
<dbReference type="EC" id="1.3.1.124" evidence="2"/>
<dbReference type="EMBL" id="CR858530">
    <property type="protein sequence ID" value="CAH90757.1"/>
    <property type="molecule type" value="mRNA"/>
</dbReference>
<dbReference type="RefSeq" id="NP_001125423.1">
    <property type="nucleotide sequence ID" value="NM_001131951.2"/>
</dbReference>
<dbReference type="SMR" id="Q5RBV3"/>
<dbReference type="FunCoup" id="Q5RBV3">
    <property type="interactions" value="699"/>
</dbReference>
<dbReference type="STRING" id="9601.ENSPPYP00000007823"/>
<dbReference type="GeneID" id="100172330"/>
<dbReference type="KEGG" id="pon:100172330"/>
<dbReference type="CTD" id="26063"/>
<dbReference type="eggNOG" id="KOG0725">
    <property type="taxonomic scope" value="Eukaryota"/>
</dbReference>
<dbReference type="InParanoid" id="Q5RBV3"/>
<dbReference type="OrthoDB" id="1393670at2759"/>
<dbReference type="Proteomes" id="UP000001595">
    <property type="component" value="Unplaced"/>
</dbReference>
<dbReference type="GO" id="GO:0005777">
    <property type="term" value="C:peroxisome"/>
    <property type="evidence" value="ECO:0007669"/>
    <property type="project" value="UniProtKB-SubCell"/>
</dbReference>
<dbReference type="GO" id="GO:0008670">
    <property type="term" value="F:2,4-dienoyl-CoA reductase (NADPH) activity"/>
    <property type="evidence" value="ECO:0000250"/>
    <property type="project" value="UniProtKB"/>
</dbReference>
<dbReference type="GO" id="GO:0009062">
    <property type="term" value="P:fatty acid catabolic process"/>
    <property type="evidence" value="ECO:0007669"/>
    <property type="project" value="InterPro"/>
</dbReference>
<dbReference type="CDD" id="cd05369">
    <property type="entry name" value="TER_DECR_SDR_a"/>
    <property type="match status" value="1"/>
</dbReference>
<dbReference type="FunFam" id="3.40.50.720:FF:000477">
    <property type="entry name" value="Peroxisomal 2,4-dienoyl-CoA reductase"/>
    <property type="match status" value="1"/>
</dbReference>
<dbReference type="Gene3D" id="3.40.50.720">
    <property type="entry name" value="NAD(P)-binding Rossmann-like Domain"/>
    <property type="match status" value="1"/>
</dbReference>
<dbReference type="InterPro" id="IPR045017">
    <property type="entry name" value="DECR2-like"/>
</dbReference>
<dbReference type="InterPro" id="IPR036291">
    <property type="entry name" value="NAD(P)-bd_dom_sf"/>
</dbReference>
<dbReference type="InterPro" id="IPR002347">
    <property type="entry name" value="SDR_fam"/>
</dbReference>
<dbReference type="PANTHER" id="PTHR43296">
    <property type="entry name" value="PEROXISOMAL 2,4-DIENOYL-COA REDUCTASE"/>
    <property type="match status" value="1"/>
</dbReference>
<dbReference type="PANTHER" id="PTHR43296:SF2">
    <property type="entry name" value="PEROXISOMAL 2,4-DIENOYL-COA REDUCTASE [(3E)-ENOYL-COA-PRODUCING]"/>
    <property type="match status" value="1"/>
</dbReference>
<dbReference type="Pfam" id="PF13561">
    <property type="entry name" value="adh_short_C2"/>
    <property type="match status" value="1"/>
</dbReference>
<dbReference type="PRINTS" id="PR00081">
    <property type="entry name" value="GDHRDH"/>
</dbReference>
<dbReference type="PRINTS" id="PR00080">
    <property type="entry name" value="SDRFAMILY"/>
</dbReference>
<dbReference type="SMART" id="SM00822">
    <property type="entry name" value="PKS_KR"/>
    <property type="match status" value="1"/>
</dbReference>
<dbReference type="SUPFAM" id="SSF51735">
    <property type="entry name" value="NAD(P)-binding Rossmann-fold domains"/>
    <property type="match status" value="1"/>
</dbReference>